<sequence>MAFLRSMWGVLSALGRSGAELCTGCGSRLRSPFSFVYLPRWFSSVLASCPKKPVSSYLRFSKEQLPIFKAQNPDAKTTELIRRIAQRWRELPDSKKKIYQDAYRAEWQVYKEEISRFKEQLTPSQIMSLEKEIMDKHLKRKAMTKKKELTLLGKPKRPRSAYNVYVAERFQEAKGDSPQEKLKTVKENWKNLSDSEKELYIQHAKEDETRYHNEMKSWEEQMIEVGRKDLLRRTIKKQRKYGAEEC</sequence>
<name>TFAM_HUMAN</name>
<reference key="1">
    <citation type="journal article" date="1991" name="Science">
        <title>Similarity of human mitochondrial transcription factor 1 to high mobility group proteins.</title>
        <authorList>
            <person name="Parisi M.A."/>
            <person name="Clayton D.A."/>
        </authorList>
    </citation>
    <scope>NUCLEOTIDE SEQUENCE [MRNA] (ISOFORM 1)</scope>
    <scope>PROTEIN SEQUENCE OF 1-21</scope>
</reference>
<reference key="2">
    <citation type="submission" date="2007-11" db="EMBL/GenBank/DDBJ databases">
        <authorList>
            <person name="Li K.N."/>
            <person name="Zhang Y.Q."/>
            <person name="Yang S.J."/>
        </authorList>
    </citation>
    <scope>NUCLEOTIDE SEQUENCE [MRNA] (ISOFORM 1)</scope>
    <source>
        <tissue>Hepatoma</tissue>
    </source>
</reference>
<reference key="3">
    <citation type="submission" date="2004-10" db="EMBL/GenBank/DDBJ databases">
        <title>Cloning of human full-length CDSs in BD Creator(TM) system donor vector.</title>
        <authorList>
            <person name="Kalnine N."/>
            <person name="Chen X."/>
            <person name="Rolfs A."/>
            <person name="Halleck A."/>
            <person name="Hines L."/>
            <person name="Eisenstein S."/>
            <person name="Koundinya M."/>
            <person name="Raphael J."/>
            <person name="Moreira D."/>
            <person name="Kelley T."/>
            <person name="LaBaer J."/>
            <person name="Lin Y."/>
            <person name="Phelan M."/>
            <person name="Farmer A."/>
        </authorList>
    </citation>
    <scope>NUCLEOTIDE SEQUENCE [LARGE SCALE MRNA] (ISOFORM 1)</scope>
</reference>
<reference key="4">
    <citation type="journal article" date="2004" name="Nat. Genet.">
        <title>Complete sequencing and characterization of 21,243 full-length human cDNAs.</title>
        <authorList>
            <person name="Ota T."/>
            <person name="Suzuki Y."/>
            <person name="Nishikawa T."/>
            <person name="Otsuki T."/>
            <person name="Sugiyama T."/>
            <person name="Irie R."/>
            <person name="Wakamatsu A."/>
            <person name="Hayashi K."/>
            <person name="Sato H."/>
            <person name="Nagai K."/>
            <person name="Kimura K."/>
            <person name="Makita H."/>
            <person name="Sekine M."/>
            <person name="Obayashi M."/>
            <person name="Nishi T."/>
            <person name="Shibahara T."/>
            <person name="Tanaka T."/>
            <person name="Ishii S."/>
            <person name="Yamamoto J."/>
            <person name="Saito K."/>
            <person name="Kawai Y."/>
            <person name="Isono Y."/>
            <person name="Nakamura Y."/>
            <person name="Nagahari K."/>
            <person name="Murakami K."/>
            <person name="Yasuda T."/>
            <person name="Iwayanagi T."/>
            <person name="Wagatsuma M."/>
            <person name="Shiratori A."/>
            <person name="Sudo H."/>
            <person name="Hosoiri T."/>
            <person name="Kaku Y."/>
            <person name="Kodaira H."/>
            <person name="Kondo H."/>
            <person name="Sugawara M."/>
            <person name="Takahashi M."/>
            <person name="Kanda K."/>
            <person name="Yokoi T."/>
            <person name="Furuya T."/>
            <person name="Kikkawa E."/>
            <person name="Omura Y."/>
            <person name="Abe K."/>
            <person name="Kamihara K."/>
            <person name="Katsuta N."/>
            <person name="Sato K."/>
            <person name="Tanikawa M."/>
            <person name="Yamazaki M."/>
            <person name="Ninomiya K."/>
            <person name="Ishibashi T."/>
            <person name="Yamashita H."/>
            <person name="Murakawa K."/>
            <person name="Fujimori K."/>
            <person name="Tanai H."/>
            <person name="Kimata M."/>
            <person name="Watanabe M."/>
            <person name="Hiraoka S."/>
            <person name="Chiba Y."/>
            <person name="Ishida S."/>
            <person name="Ono Y."/>
            <person name="Takiguchi S."/>
            <person name="Watanabe S."/>
            <person name="Yosida M."/>
            <person name="Hotuta T."/>
            <person name="Kusano J."/>
            <person name="Kanehori K."/>
            <person name="Takahashi-Fujii A."/>
            <person name="Hara H."/>
            <person name="Tanase T.-O."/>
            <person name="Nomura Y."/>
            <person name="Togiya S."/>
            <person name="Komai F."/>
            <person name="Hara R."/>
            <person name="Takeuchi K."/>
            <person name="Arita M."/>
            <person name="Imose N."/>
            <person name="Musashino K."/>
            <person name="Yuuki H."/>
            <person name="Oshima A."/>
            <person name="Sasaki N."/>
            <person name="Aotsuka S."/>
            <person name="Yoshikawa Y."/>
            <person name="Matsunawa H."/>
            <person name="Ichihara T."/>
            <person name="Shiohata N."/>
            <person name="Sano S."/>
            <person name="Moriya S."/>
            <person name="Momiyama H."/>
            <person name="Satoh N."/>
            <person name="Takami S."/>
            <person name="Terashima Y."/>
            <person name="Suzuki O."/>
            <person name="Nakagawa S."/>
            <person name="Senoh A."/>
            <person name="Mizoguchi H."/>
            <person name="Goto Y."/>
            <person name="Shimizu F."/>
            <person name="Wakebe H."/>
            <person name="Hishigaki H."/>
            <person name="Watanabe T."/>
            <person name="Sugiyama A."/>
            <person name="Takemoto M."/>
            <person name="Kawakami B."/>
            <person name="Yamazaki M."/>
            <person name="Watanabe K."/>
            <person name="Kumagai A."/>
            <person name="Itakura S."/>
            <person name="Fukuzumi Y."/>
            <person name="Fujimori Y."/>
            <person name="Komiyama M."/>
            <person name="Tashiro H."/>
            <person name="Tanigami A."/>
            <person name="Fujiwara T."/>
            <person name="Ono T."/>
            <person name="Yamada K."/>
            <person name="Fujii Y."/>
            <person name="Ozaki K."/>
            <person name="Hirao M."/>
            <person name="Ohmori Y."/>
            <person name="Kawabata A."/>
            <person name="Hikiji T."/>
            <person name="Kobatake N."/>
            <person name="Inagaki H."/>
            <person name="Ikema Y."/>
            <person name="Okamoto S."/>
            <person name="Okitani R."/>
            <person name="Kawakami T."/>
            <person name="Noguchi S."/>
            <person name="Itoh T."/>
            <person name="Shigeta K."/>
            <person name="Senba T."/>
            <person name="Matsumura K."/>
            <person name="Nakajima Y."/>
            <person name="Mizuno T."/>
            <person name="Morinaga M."/>
            <person name="Sasaki M."/>
            <person name="Togashi T."/>
            <person name="Oyama M."/>
            <person name="Hata H."/>
            <person name="Watanabe M."/>
            <person name="Komatsu T."/>
            <person name="Mizushima-Sugano J."/>
            <person name="Satoh T."/>
            <person name="Shirai Y."/>
            <person name="Takahashi Y."/>
            <person name="Nakagawa K."/>
            <person name="Okumura K."/>
            <person name="Nagase T."/>
            <person name="Nomura N."/>
            <person name="Kikuchi H."/>
            <person name="Masuho Y."/>
            <person name="Yamashita R."/>
            <person name="Nakai K."/>
            <person name="Yada T."/>
            <person name="Nakamura Y."/>
            <person name="Ohara O."/>
            <person name="Isogai T."/>
            <person name="Sugano S."/>
        </authorList>
    </citation>
    <scope>NUCLEOTIDE SEQUENCE [LARGE SCALE MRNA] (ISOFORM 1)</scope>
    <source>
        <tissue>Tongue</tissue>
    </source>
</reference>
<reference key="5">
    <citation type="journal article" date="2008" name="Nat. Methods">
        <title>Human protein factory for converting the transcriptome into an in vitro-expressed proteome.</title>
        <authorList>
            <person name="Goshima N."/>
            <person name="Kawamura Y."/>
            <person name="Fukumoto A."/>
            <person name="Miura A."/>
            <person name="Honma R."/>
            <person name="Satoh R."/>
            <person name="Wakamatsu A."/>
            <person name="Yamamoto J."/>
            <person name="Kimura K."/>
            <person name="Nishikawa T."/>
            <person name="Andoh T."/>
            <person name="Iida Y."/>
            <person name="Ishikawa K."/>
            <person name="Ito E."/>
            <person name="Kagawa N."/>
            <person name="Kaminaga C."/>
            <person name="Kanehori K."/>
            <person name="Kawakami B."/>
            <person name="Kenmochi K."/>
            <person name="Kimura R."/>
            <person name="Kobayashi M."/>
            <person name="Kuroita T."/>
            <person name="Kuwayama H."/>
            <person name="Maruyama Y."/>
            <person name="Matsuo K."/>
            <person name="Minami K."/>
            <person name="Mitsubori M."/>
            <person name="Mori M."/>
            <person name="Morishita R."/>
            <person name="Murase A."/>
            <person name="Nishikawa A."/>
            <person name="Nishikawa S."/>
            <person name="Okamoto T."/>
            <person name="Sakagami N."/>
            <person name="Sakamoto Y."/>
            <person name="Sasaki Y."/>
            <person name="Seki T."/>
            <person name="Sono S."/>
            <person name="Sugiyama A."/>
            <person name="Sumiya T."/>
            <person name="Takayama T."/>
            <person name="Takayama Y."/>
            <person name="Takeda H."/>
            <person name="Togashi T."/>
            <person name="Yahata K."/>
            <person name="Yamada H."/>
            <person name="Yanagisawa Y."/>
            <person name="Endo Y."/>
            <person name="Imamoto F."/>
            <person name="Kisu Y."/>
            <person name="Tanaka S."/>
            <person name="Isogai T."/>
            <person name="Imai J."/>
            <person name="Watanabe S."/>
            <person name="Nomura N."/>
        </authorList>
    </citation>
    <scope>NUCLEOTIDE SEQUENCE [LARGE SCALE MRNA] (ISOFORM 1)</scope>
    <scope>VARIANT THR-12</scope>
</reference>
<reference key="6">
    <citation type="journal article" date="2004" name="Nature">
        <title>The DNA sequence and comparative analysis of human chromosome 10.</title>
        <authorList>
            <person name="Deloukas P."/>
            <person name="Earthrowl M.E."/>
            <person name="Grafham D.V."/>
            <person name="Rubenfield M."/>
            <person name="French L."/>
            <person name="Steward C.A."/>
            <person name="Sims S.K."/>
            <person name="Jones M.C."/>
            <person name="Searle S."/>
            <person name="Scott C."/>
            <person name="Howe K."/>
            <person name="Hunt S.E."/>
            <person name="Andrews T.D."/>
            <person name="Gilbert J.G.R."/>
            <person name="Swarbreck D."/>
            <person name="Ashurst J.L."/>
            <person name="Taylor A."/>
            <person name="Battles J."/>
            <person name="Bird C.P."/>
            <person name="Ainscough R."/>
            <person name="Almeida J.P."/>
            <person name="Ashwell R.I.S."/>
            <person name="Ambrose K.D."/>
            <person name="Babbage A.K."/>
            <person name="Bagguley C.L."/>
            <person name="Bailey J."/>
            <person name="Banerjee R."/>
            <person name="Bates K."/>
            <person name="Beasley H."/>
            <person name="Bray-Allen S."/>
            <person name="Brown A.J."/>
            <person name="Brown J.Y."/>
            <person name="Burford D.C."/>
            <person name="Burrill W."/>
            <person name="Burton J."/>
            <person name="Cahill P."/>
            <person name="Camire D."/>
            <person name="Carter N.P."/>
            <person name="Chapman J.C."/>
            <person name="Clark S.Y."/>
            <person name="Clarke G."/>
            <person name="Clee C.M."/>
            <person name="Clegg S."/>
            <person name="Corby N."/>
            <person name="Coulson A."/>
            <person name="Dhami P."/>
            <person name="Dutta I."/>
            <person name="Dunn M."/>
            <person name="Faulkner L."/>
            <person name="Frankish A."/>
            <person name="Frankland J.A."/>
            <person name="Garner P."/>
            <person name="Garnett J."/>
            <person name="Gribble S."/>
            <person name="Griffiths C."/>
            <person name="Grocock R."/>
            <person name="Gustafson E."/>
            <person name="Hammond S."/>
            <person name="Harley J.L."/>
            <person name="Hart E."/>
            <person name="Heath P.D."/>
            <person name="Ho T.P."/>
            <person name="Hopkins B."/>
            <person name="Horne J."/>
            <person name="Howden P.J."/>
            <person name="Huckle E."/>
            <person name="Hynds C."/>
            <person name="Johnson C."/>
            <person name="Johnson D."/>
            <person name="Kana A."/>
            <person name="Kay M."/>
            <person name="Kimberley A.M."/>
            <person name="Kershaw J.K."/>
            <person name="Kokkinaki M."/>
            <person name="Laird G.K."/>
            <person name="Lawlor S."/>
            <person name="Lee H.M."/>
            <person name="Leongamornlert D.A."/>
            <person name="Laird G."/>
            <person name="Lloyd C."/>
            <person name="Lloyd D.M."/>
            <person name="Loveland J."/>
            <person name="Lovell J."/>
            <person name="McLaren S."/>
            <person name="McLay K.E."/>
            <person name="McMurray A."/>
            <person name="Mashreghi-Mohammadi M."/>
            <person name="Matthews L."/>
            <person name="Milne S."/>
            <person name="Nickerson T."/>
            <person name="Nguyen M."/>
            <person name="Overton-Larty E."/>
            <person name="Palmer S.A."/>
            <person name="Pearce A.V."/>
            <person name="Peck A.I."/>
            <person name="Pelan S."/>
            <person name="Phillimore B."/>
            <person name="Porter K."/>
            <person name="Rice C.M."/>
            <person name="Rogosin A."/>
            <person name="Ross M.T."/>
            <person name="Sarafidou T."/>
            <person name="Sehra H.K."/>
            <person name="Shownkeen R."/>
            <person name="Skuce C.D."/>
            <person name="Smith M."/>
            <person name="Standring L."/>
            <person name="Sycamore N."/>
            <person name="Tester J."/>
            <person name="Thorpe A."/>
            <person name="Torcasso W."/>
            <person name="Tracey A."/>
            <person name="Tromans A."/>
            <person name="Tsolas J."/>
            <person name="Wall M."/>
            <person name="Walsh J."/>
            <person name="Wang H."/>
            <person name="Weinstock K."/>
            <person name="West A.P."/>
            <person name="Willey D.L."/>
            <person name="Whitehead S.L."/>
            <person name="Wilming L."/>
            <person name="Wray P.W."/>
            <person name="Young L."/>
            <person name="Chen Y."/>
            <person name="Lovering R.C."/>
            <person name="Moschonas N.K."/>
            <person name="Siebert R."/>
            <person name="Fechtel K."/>
            <person name="Bentley D."/>
            <person name="Durbin R.M."/>
            <person name="Hubbard T."/>
            <person name="Doucette-Stamm L."/>
            <person name="Beck S."/>
            <person name="Smith D.R."/>
            <person name="Rogers J."/>
        </authorList>
    </citation>
    <scope>NUCLEOTIDE SEQUENCE [LARGE SCALE GENOMIC DNA]</scope>
</reference>
<reference key="7">
    <citation type="journal article" date="2004" name="Genome Res.">
        <title>The status, quality, and expansion of the NIH full-length cDNA project: the Mammalian Gene Collection (MGC).</title>
        <authorList>
            <consortium name="The MGC Project Team"/>
        </authorList>
    </citation>
    <scope>NUCLEOTIDE SEQUENCE [LARGE SCALE MRNA] (ISOFORM 1)</scope>
</reference>
<reference key="8">
    <citation type="journal article" date="1992" name="Biochim. Biophys. Acta">
        <title>Upstream region of a genomic gene for human mitochondrial transcription factor 1.</title>
        <authorList>
            <person name="Tominaga K."/>
            <person name="Akiyama S."/>
            <person name="Kagawa Y."/>
            <person name="Ohta S."/>
        </authorList>
    </citation>
    <scope>NUCLEOTIDE SEQUENCE [GENOMIC DNA] OF 1-34</scope>
    <scope>VARIANT THR-12</scope>
    <source>
        <tissue>Lymphocyte</tissue>
    </source>
</reference>
<reference key="9">
    <citation type="journal article" date="1992" name="J. Biol. Chem.">
        <title>DNA wrapping and bending by a mitochondrial high mobility group-like transcriptional activator protein.</title>
        <authorList>
            <person name="Fisher R.P."/>
            <person name="Lisowsky T."/>
            <person name="Parisi M.A."/>
            <person name="Clayton D.A."/>
        </authorList>
    </citation>
    <scope>FUNCTION</scope>
    <scope>SUBCELLULAR LOCATION</scope>
</reference>
<reference key="10">
    <citation type="journal article" date="2003" name="Mol. Cell. Biol.">
        <title>Human mitochondrial transcription factor B1 interacts with the C-terminal activation region of h-mtTFA and stimulates transcription independently of its RNA methyltransferase activity.</title>
        <authorList>
            <person name="McCulloch V."/>
            <person name="Shadel G.S."/>
        </authorList>
    </citation>
    <scope>INTERACTION WITH TFB1M AND TFB2M</scope>
</reference>
<reference key="11">
    <citation type="journal article" date="2008" name="J. Biol. Chem.">
        <title>The layered structure of human mitochondrial DNA nucleoids.</title>
        <authorList>
            <person name="Bogenhagen D.F."/>
            <person name="Rousseau D."/>
            <person name="Burke S."/>
        </authorList>
    </citation>
    <scope>SUBCELLULAR LOCATION</scope>
    <scope>ASSOCIATION WITH MITOCHONDRIAL DNA</scope>
    <scope>IDENTIFICATION BY MASS SPECTROMETRY</scope>
</reference>
<reference key="12">
    <citation type="journal article" date="2008" name="Proc. Natl. Acad. Sci. U.S.A.">
        <title>A quantitative atlas of mitotic phosphorylation.</title>
        <authorList>
            <person name="Dephoure N."/>
            <person name="Zhou C."/>
            <person name="Villen J."/>
            <person name="Beausoleil S.A."/>
            <person name="Bakalarski C.E."/>
            <person name="Elledge S.J."/>
            <person name="Gygi S.P."/>
        </authorList>
    </citation>
    <scope>PHOSPHORYLATION [LARGE SCALE ANALYSIS] AT SER-193</scope>
    <scope>IDENTIFICATION BY MASS SPECTROMETRY [LARGE SCALE ANALYSIS]</scope>
    <source>
        <tissue>Cervix carcinoma</tissue>
    </source>
</reference>
<reference key="13">
    <citation type="journal article" date="2010" name="J. Biol. Chem.">
        <title>Human mitochondrial transcription revisited: only TFAM and TFB2M are required for transcription of the mitochondrial genes in vitro.</title>
        <authorList>
            <person name="Litonin D."/>
            <person name="Sologub M."/>
            <person name="Shi Y."/>
            <person name="Savkina M."/>
            <person name="Anikin M."/>
            <person name="Falkenberg M."/>
            <person name="Gustafsson C.M."/>
            <person name="Temiakov D."/>
        </authorList>
    </citation>
    <scope>FUNCTION</scope>
</reference>
<reference key="14">
    <citation type="journal article" date="2011" name="BMC Syst. Biol.">
        <title>Initial characterization of the human central proteome.</title>
        <authorList>
            <person name="Burkard T.R."/>
            <person name="Planyavsky M."/>
            <person name="Kaupe I."/>
            <person name="Breitwieser F.P."/>
            <person name="Buerckstuemmer T."/>
            <person name="Bennett K.L."/>
            <person name="Superti-Furga G."/>
            <person name="Colinge J."/>
        </authorList>
    </citation>
    <scope>IDENTIFICATION BY MASS SPECTROMETRY [LARGE SCALE ANALYSIS]</scope>
</reference>
<reference key="15">
    <citation type="journal article" date="2011" name="Sci. Signal.">
        <title>System-wide temporal characterization of the proteome and phosphoproteome of human embryonic stem cell differentiation.</title>
        <authorList>
            <person name="Rigbolt K.T."/>
            <person name="Prokhorova T.A."/>
            <person name="Akimov V."/>
            <person name="Henningsen J."/>
            <person name="Johansen P.T."/>
            <person name="Kratchmarova I."/>
            <person name="Kassem M."/>
            <person name="Mann M."/>
            <person name="Olsen J.V."/>
            <person name="Blagoev B."/>
        </authorList>
    </citation>
    <scope>IDENTIFICATION BY MASS SPECTROMETRY [LARGE SCALE ANALYSIS]</scope>
</reference>
<reference key="16">
    <citation type="journal article" date="2012" name="Exp. Cell Res.">
        <title>Maintenance of mitochondrial genome distribution by mitochondrial AAA+ protein ClpX.</title>
        <authorList>
            <person name="Kasashima K."/>
            <person name="Sumitani M."/>
            <person name="Endo H."/>
        </authorList>
    </citation>
    <scope>FUNCTION</scope>
    <scope>SUBCELLULAR LOCATION</scope>
    <scope>INTERACTION WITH CLPX</scope>
</reference>
<reference key="17">
    <citation type="journal article" date="2013" name="J. Proteome Res.">
        <title>Toward a comprehensive characterization of a human cancer cell phosphoproteome.</title>
        <authorList>
            <person name="Zhou H."/>
            <person name="Di Palma S."/>
            <person name="Preisinger C."/>
            <person name="Peng M."/>
            <person name="Polat A.N."/>
            <person name="Heck A.J."/>
            <person name="Mohammed S."/>
        </authorList>
    </citation>
    <scope>PHOSPHORYLATION [LARGE SCALE ANALYSIS] AT THR-122; SER-193 AND SER-195</scope>
    <scope>IDENTIFICATION BY MASS SPECTROMETRY [LARGE SCALE ANALYSIS]</scope>
    <source>
        <tissue>Cervix carcinoma</tissue>
        <tissue>Erythroleukemia</tissue>
    </source>
</reference>
<reference key="18">
    <citation type="journal article" date="2013" name="Mol. Cell">
        <title>Phosphorylation of human TFAM in mitochondria impairs DNA binding and promotes degradation by the AAA+ Lon protease.</title>
        <authorList>
            <person name="Lu B."/>
            <person name="Lee J."/>
            <person name="Nie X."/>
            <person name="Li M."/>
            <person name="Morozov Y.I."/>
            <person name="Venkatesh S."/>
            <person name="Bogenhagen D.F."/>
            <person name="Temiakov D."/>
            <person name="Suzuki C.K."/>
        </authorList>
    </citation>
    <scope>PHOSPHORYLATION AT SER-55; SER-56; SER-61 AND SER-160</scope>
</reference>
<reference key="19">
    <citation type="journal article" date="2015" name="Proteomics">
        <title>N-terminome analysis of the human mitochondrial proteome.</title>
        <authorList>
            <person name="Vaca Jacome A.S."/>
            <person name="Rabilloud T."/>
            <person name="Schaeffer-Reiss C."/>
            <person name="Rompais M."/>
            <person name="Ayoub D."/>
            <person name="Lane L."/>
            <person name="Bairoch A."/>
            <person name="Van Dorsselaer A."/>
            <person name="Carapito C."/>
        </authorList>
    </citation>
    <scope>CLEAVAGE OF TRANSIT PEPTIDE [LARGE SCALE ANALYSIS] AFTER PHE-42</scope>
    <scope>IDENTIFICATION BY MASS SPECTROMETRY [LARGE SCALE ANALYSIS]</scope>
</reference>
<reference key="20">
    <citation type="journal article" date="2016" name="Mol. Genet. Metab.">
        <title>Mutations in TFAM, encoding mitochondrial transcription factor A, cause neonatal liver failure associated with mtDNA depletion.</title>
        <authorList>
            <person name="Stiles A.R."/>
            <person name="Simon M.T."/>
            <person name="Stover A."/>
            <person name="Eftekharian S."/>
            <person name="Khanlou N."/>
            <person name="Wang H.L."/>
            <person name="Magaki S."/>
            <person name="Lee H."/>
            <person name="Partynski K."/>
            <person name="Dorrani N."/>
            <person name="Chang R."/>
            <person name="Martinez-Agosto J.A."/>
            <person name="Abdenur J.E."/>
        </authorList>
    </citation>
    <scope>INVOLVEMENT IN MTDPS15</scope>
    <scope>VARIANT MTDPS15 LEU-178</scope>
</reference>
<reference key="21">
    <citation type="journal article" date="2018" name="Cell Death Dis.">
        <title>Uncoupling FoxO3A mitochondrial and nuclear functions in cancer cells undergoing metabolic stress and chemotherapy.</title>
        <authorList>
            <person name="Celestini V."/>
            <person name="Tezil T."/>
            <person name="Russo L."/>
            <person name="Fasano C."/>
            <person name="Sanese P."/>
            <person name="Forte G."/>
            <person name="Peserico A."/>
            <person name="Lepore Signorile M."/>
            <person name="Longo G."/>
            <person name="De Rasmo D."/>
            <person name="Signorile A."/>
            <person name="Gadaleta R.M."/>
            <person name="Scialpi N."/>
            <person name="Terao M."/>
            <person name="Garattini E."/>
            <person name="Cocco T."/>
            <person name="Villani G."/>
            <person name="Moschetta A."/>
            <person name="Grossi V."/>
            <person name="Simone C."/>
        </authorList>
    </citation>
    <scope>FUNCTION</scope>
    <scope>IDENTIFICATION IN A COMPLEX WITH FOXO3; SIRT3 AND POLRMT</scope>
    <scope>SUBCELLULAR LOCATION</scope>
</reference>
<reference key="22">
    <citation type="journal article" date="2020" name="Mol. Cell">
        <title>N6-deoxyadenosine methylation in mammalian mitochondrial DNA.</title>
        <authorList>
            <person name="Hao Z."/>
            <person name="Wu T."/>
            <person name="Cui X."/>
            <person name="Zhu P."/>
            <person name="Tan C."/>
            <person name="Dou X."/>
            <person name="Hsu K.W."/>
            <person name="Lin Y.T."/>
            <person name="Peng P.H."/>
            <person name="Zhang L.S."/>
            <person name="Gao Y."/>
            <person name="Hu L."/>
            <person name="Sun H.L."/>
            <person name="Zhu A."/>
            <person name="Liu J."/>
            <person name="Wu K.J."/>
            <person name="He C."/>
        </authorList>
    </citation>
    <scope>FUNCTION</scope>
</reference>
<reference key="23">
    <citation type="journal article" date="2009" name="Nucleic Acids Res.">
        <title>Structural analysis and DNA binding of the HMG domains of the human mitochondrial transcription factor A.</title>
        <authorList>
            <person name="Gangelhoff T.A."/>
            <person name="Mungalachetty P.S."/>
            <person name="Nix J.C."/>
            <person name="Churchill M.E."/>
        </authorList>
    </citation>
    <scope>X-RAY CRYSTALLOGRAPHY (1.35 ANGSTROMS) OF 153-218</scope>
    <scope>FUNCTION</scope>
    <scope>SUBUNIT</scope>
</reference>
<reference key="24">
    <citation type="journal article" date="2011" name="Nat. Struct. Mol. Biol.">
        <title>Human mitochondrial transcription factor A induces a U-turn structure in the light strand promoter.</title>
        <authorList>
            <person name="Rubio-Cosials A."/>
            <person name="Sidow J.F."/>
            <person name="Jimenez-Menendez N."/>
            <person name="Fernandez-Millan P."/>
            <person name="Montoya J."/>
            <person name="Jacobs H.T."/>
            <person name="Coll M."/>
            <person name="Bernado P."/>
            <person name="Sola M."/>
        </authorList>
    </citation>
    <scope>X-RAY CRYSTALLOGRAPHY (2.45 ANGSTROMS) OF 43-246 IN COMPLEX WITH DNA</scope>
    <scope>DNA-BINDING</scope>
    <scope>DOMAIN</scope>
    <scope>SUBUNIT</scope>
    <scope>SITE</scope>
    <scope>FUNCTION</scope>
</reference>
<reference key="25">
    <citation type="journal article" date="2011" name="Nat. Struct. Mol. Biol.">
        <title>The mitochondrial transcription and packaging factor Tfam imposes a U-turn on mitochondrial DNA.</title>
        <authorList>
            <person name="Ngo H.B."/>
            <person name="Kaiser J.T."/>
            <person name="Chan D.C."/>
        </authorList>
    </citation>
    <scope>X-RAY CRYSTALLOGRAPHY (2.5 ANGSTROMS) OF 43-246 IN COMPLEX WITH DNA</scope>
    <scope>FUNCTION</scope>
    <scope>DNA-BINDING</scope>
    <scope>DOMAIN</scope>
    <scope>SUBUNIT</scope>
    <scope>MUTAGENESIS OF THR-77 AND TYR-162</scope>
</reference>
<reference evidence="21 22" key="26">
    <citation type="journal article" date="2017" name="Cell">
        <title>Structural Basis of Mitochondrial Transcription Initiation.</title>
        <authorList>
            <person name="Hillen H.S."/>
            <person name="Morozov Y.I."/>
            <person name="Sarfallah A."/>
            <person name="Temiakov D."/>
            <person name="Cramer P."/>
        </authorList>
    </citation>
    <scope>X-RAY CRYSTALLOGRAPHY (4.50 ANGSTROMS) OF 43-245 IN COMPLEX WITH POLRMT; TFB2M AND DNA</scope>
    <scope>SUBUNIT</scope>
</reference>
<reference key="27">
    <citation type="journal article" date="2008" name="Dis. Markers">
        <title>Mitochondrial transcription factors TFA, TFB1 and TFB2: a search for DNA variants/haplotypes and the risk of cardiac hypertrophy.</title>
        <authorList>
            <person name="Alonso-Montes C."/>
            <person name="Castro M.G."/>
            <person name="Reguero J.R."/>
            <person name="Perrot A."/>
            <person name="Ozcelik C."/>
            <person name="Geier C."/>
            <person name="Posch M.G."/>
            <person name="Moris C."/>
            <person name="Alvarez V."/>
            <person name="Ruiz-Ortega M."/>
            <person name="Coto E."/>
        </authorList>
    </citation>
    <scope>VARIANT THR-12</scope>
</reference>
<comment type="function">
    <text evidence="5 9 10 11 12 13 16 17 18">Binds to the mitochondrial light strand promoter and functions in mitochondrial transcription regulation (PubMed:29445193, PubMed:32183942). Component of the mitochondrial transcription initiation complex, composed at least of TFB2M, TFAM and POLRMT that is required for basal transcription of mitochondrial DNA (PubMed:29149603). In this complex, TFAM recruits POLRMT to a specific promoter whereas TFB2M induces structural changes in POLRMT to enable promoter opening and trapping of the DNA non-template strand (PubMed:20410300). Required for accurate and efficient promoter recognition by the mitochondrial RNA polymerase (PubMed:22037172). Promotes transcription initiation from the HSP1 and the light strand promoter by binding immediately upstream of transcriptional start sites (PubMed:22037172). Is able to unwind DNA (PubMed:22037172). Bends the mitochondrial light strand promoter DNA into a U-turn shape via its HMG boxes (PubMed:1737790). Required for maintenance of normal levels of mitochondrial DNA (PubMed:19304746, PubMed:22841477). May play a role in organizing and compacting mitochondrial DNA (PubMed:22037171).</text>
</comment>
<comment type="subunit">
    <text evidence="3 9 11 12 13 16 17">Monomer; binds DNA as a monomer (PubMed:19304746, PubMed:22037171, PubMed:22037172). Homodimer (PubMed:29149603). Component of the mitochondrial transcription initiation complex, composed at least of TFB2M, TFAM and POLRMT (PubMed:29149603). In this complex TFAM recruits POLRMT to the promoter whereas TFB2M induces structural changes in POLRMT to enable promoter opening and trapping of the DNA non-template strand (PubMed:29149603). Upon metabolic stress, forms a complex composed of FOXO3, SIRT3, TFAM and POLRMT (PubMed:12897151, PubMed:29445193). Interacts with TFB1M and TFB2M (PubMed:12897151). Interacts with CLPX; this enhances DNA-binding (PubMed:22841477).</text>
</comment>
<comment type="interaction">
    <interactant intactId="EBI-1049924">
        <id>Q00059</id>
    </interactant>
    <interactant intactId="EBI-741181">
        <id>Q6RW13</id>
        <label>AGTRAP</label>
    </interactant>
    <organismsDiffer>false</organismsDiffer>
    <experiments>3</experiments>
</comment>
<comment type="interaction">
    <interactant intactId="EBI-1049924">
        <id>Q00059</id>
    </interactant>
    <interactant intactId="EBI-11522760">
        <id>Q6RW13-2</id>
        <label>AGTRAP</label>
    </interactant>
    <organismsDiffer>false</organismsDiffer>
    <experiments>3</experiments>
</comment>
<comment type="interaction">
    <interactant intactId="EBI-1049924">
        <id>Q00059</id>
    </interactant>
    <interactant intactId="EBI-714543">
        <id>Q15041</id>
        <label>ARL6IP1</label>
    </interactant>
    <organismsDiffer>false</organismsDiffer>
    <experiments>3</experiments>
</comment>
<comment type="interaction">
    <interactant intactId="EBI-1049924">
        <id>Q00059</id>
    </interactant>
    <interactant intactId="EBI-10241815">
        <id>Q4VAQ0</id>
        <label>COL8A2</label>
    </interactant>
    <organismsDiffer>false</organismsDiffer>
    <experiments>3</experiments>
</comment>
<comment type="interaction">
    <interactant intactId="EBI-1049924">
        <id>Q00059</id>
    </interactant>
    <interactant intactId="EBI-724754">
        <id>O14880</id>
        <label>MGST3</label>
    </interactant>
    <organismsDiffer>false</organismsDiffer>
    <experiments>4</experiments>
</comment>
<comment type="interaction">
    <interactant intactId="EBI-1049924">
        <id>Q00059</id>
    </interactant>
    <interactant intactId="EBI-738687">
        <id>P02808</id>
        <label>STATH</label>
    </interactant>
    <organismsDiffer>false</organismsDiffer>
    <experiments>3</experiments>
</comment>
<comment type="interaction">
    <interactant intactId="EBI-1049924">
        <id>Q00059</id>
    </interactant>
    <interactant intactId="EBI-2877718">
        <id>Q9NZ01</id>
        <label>TECR</label>
    </interactant>
    <organismsDiffer>false</organismsDiffer>
    <experiments>3</experiments>
</comment>
<comment type="interaction">
    <interactant intactId="EBI-1049924">
        <id>Q00059</id>
    </interactant>
    <interactant intactId="EBI-2615570">
        <id>Q8WVM0</id>
        <label>TFB1M</label>
    </interactant>
    <organismsDiffer>false</organismsDiffer>
    <experiments>2</experiments>
</comment>
<comment type="interaction">
    <interactant intactId="EBI-1049924">
        <id>Q00059</id>
    </interactant>
    <interactant intactId="EBI-3914312">
        <id>O60635</id>
        <label>TSPAN1</label>
    </interactant>
    <organismsDiffer>false</organismsDiffer>
    <experiments>3</experiments>
</comment>
<comment type="subcellular location">
    <subcellularLocation>
        <location evidence="5 6 13 17">Mitochondrion</location>
    </subcellularLocation>
    <subcellularLocation>
        <location evidence="6">Mitochondrion matrix</location>
        <location evidence="6">Mitochondrion nucleoid</location>
    </subcellularLocation>
</comment>
<comment type="alternative products">
    <event type="alternative splicing"/>
    <isoform>
        <id>Q00059-1</id>
        <name>1</name>
        <sequence type="displayed"/>
    </isoform>
    <isoform>
        <id>Q00059-2</id>
        <name>2</name>
        <sequence type="described" ref="VSP_047019"/>
    </isoform>
</comment>
<comment type="domain">
    <text evidence="11 12">Binds DNA via its HMG boxes. When bound to the mitochondrial light strand promoter, bends DNA into a U-turn shape, each HMG box bending the DNA by 90 degrees.</text>
</comment>
<comment type="PTM">
    <text evidence="14">Phosphorylation by PKA within the HMG box 1 impairs DNA binding and promotes degradation by the AAA+ Lon protease.</text>
</comment>
<comment type="disease" evidence="15">
    <disease id="DI-04864">
        <name>Mitochondrial DNA depletion syndrome 15, hepatocerebral type</name>
        <acronym>MTDPS15</acronym>
        <description>An autosomal recessive mitochondrial disorder characterized by severe intrauterine growth restriction, neonatal-onset hypoglycemia and liver dysfunction, mitochondrial DNA depletion in liver and skeletal muscle, and abnormal mitochondrial morphology observed in skeletal muscle. Hepatic pathology includes cirrhosis, steatosis and cholestasis. Progression to liver failure and death is rapid with no evidence of neurological impairment or other organ involvement.</description>
        <dbReference type="MIM" id="617156"/>
    </disease>
    <text>The disease is caused by variants affecting the gene represented in this entry.</text>
</comment>
<keyword id="KW-0002">3D-structure</keyword>
<keyword id="KW-0010">Activator</keyword>
<keyword id="KW-0025">Alternative splicing</keyword>
<keyword id="KW-0903">Direct protein sequencing</keyword>
<keyword id="KW-0225">Disease variant</keyword>
<keyword id="KW-0238">DNA-binding</keyword>
<keyword id="KW-0496">Mitochondrion</keyword>
<keyword id="KW-1135">Mitochondrion nucleoid</keyword>
<keyword id="KW-0597">Phosphoprotein</keyword>
<keyword id="KW-1274">Primary mitochondrial disease</keyword>
<keyword id="KW-1267">Proteomics identification</keyword>
<keyword id="KW-1185">Reference proteome</keyword>
<keyword id="KW-0677">Repeat</keyword>
<keyword id="KW-0804">Transcription</keyword>
<keyword id="KW-0805">Transcription regulation</keyword>
<keyword id="KW-0809">Transit peptide</keyword>
<evidence type="ECO:0000255" key="1"/>
<evidence type="ECO:0000255" key="2">
    <source>
        <dbReference type="PROSITE-ProRule" id="PRU00267"/>
    </source>
</evidence>
<evidence type="ECO:0000269" key="3">
    <source>
    </source>
</evidence>
<evidence type="ECO:0000269" key="4">
    <source>
    </source>
</evidence>
<evidence type="ECO:0000269" key="5">
    <source>
    </source>
</evidence>
<evidence type="ECO:0000269" key="6">
    <source>
    </source>
</evidence>
<evidence type="ECO:0000269" key="7">
    <source>
    </source>
</evidence>
<evidence type="ECO:0000269" key="8">
    <source>
    </source>
</evidence>
<evidence type="ECO:0000269" key="9">
    <source>
    </source>
</evidence>
<evidence type="ECO:0000269" key="10">
    <source>
    </source>
</evidence>
<evidence type="ECO:0000269" key="11">
    <source>
    </source>
</evidence>
<evidence type="ECO:0000269" key="12">
    <source>
    </source>
</evidence>
<evidence type="ECO:0000269" key="13">
    <source>
    </source>
</evidence>
<evidence type="ECO:0000269" key="14">
    <source>
    </source>
</evidence>
<evidence type="ECO:0000269" key="15">
    <source>
    </source>
</evidence>
<evidence type="ECO:0000269" key="16">
    <source>
    </source>
</evidence>
<evidence type="ECO:0000269" key="17">
    <source>
    </source>
</evidence>
<evidence type="ECO:0000269" key="18">
    <source>
    </source>
</evidence>
<evidence type="ECO:0000305" key="19"/>
<evidence type="ECO:0000312" key="20">
    <source>
        <dbReference type="HGNC" id="HGNC:11741"/>
    </source>
</evidence>
<evidence type="ECO:0007744" key="21">
    <source>
        <dbReference type="PDB" id="6ERP"/>
    </source>
</evidence>
<evidence type="ECO:0007744" key="22">
    <source>
        <dbReference type="PDB" id="6ERQ"/>
    </source>
</evidence>
<evidence type="ECO:0007744" key="23">
    <source>
    </source>
</evidence>
<evidence type="ECO:0007744" key="24">
    <source>
    </source>
</evidence>
<evidence type="ECO:0007744" key="25">
    <source>
    </source>
</evidence>
<evidence type="ECO:0007829" key="26">
    <source>
        <dbReference type="PDB" id="3FGH"/>
    </source>
</evidence>
<evidence type="ECO:0007829" key="27">
    <source>
        <dbReference type="PDB" id="3TQ6"/>
    </source>
</evidence>
<evidence type="ECO:0007829" key="28">
    <source>
        <dbReference type="PDB" id="7LBW"/>
    </source>
</evidence>
<protein>
    <recommendedName>
        <fullName evidence="19">Transcription factor A, mitochondrial</fullName>
        <shortName>mtTFA</shortName>
    </recommendedName>
    <alternativeName>
        <fullName>Mitochondrial transcription factor 1</fullName>
        <shortName>MtTF1</shortName>
    </alternativeName>
    <alternativeName>
        <fullName>Transcription factor 6</fullName>
        <shortName>TCF-6</shortName>
    </alternativeName>
    <alternativeName>
        <fullName>Transcription factor 6-like 2</fullName>
    </alternativeName>
</protein>
<proteinExistence type="evidence at protein level"/>
<dbReference type="EMBL" id="M62810">
    <property type="protein sequence ID" value="AAA59849.1"/>
    <property type="molecule type" value="mRNA"/>
</dbReference>
<dbReference type="EMBL" id="EU279428">
    <property type="protein sequence ID" value="ABX72056.1"/>
    <property type="molecule type" value="mRNA"/>
</dbReference>
<dbReference type="EMBL" id="BT019658">
    <property type="protein sequence ID" value="AAV38464.1"/>
    <property type="molecule type" value="mRNA"/>
</dbReference>
<dbReference type="EMBL" id="BT019659">
    <property type="protein sequence ID" value="AAV38465.1"/>
    <property type="molecule type" value="mRNA"/>
</dbReference>
<dbReference type="EMBL" id="AK312558">
    <property type="protein sequence ID" value="BAG35455.1"/>
    <property type="molecule type" value="mRNA"/>
</dbReference>
<dbReference type="EMBL" id="AB451241">
    <property type="protein sequence ID" value="BAG70055.1"/>
    <property type="molecule type" value="mRNA"/>
</dbReference>
<dbReference type="EMBL" id="AB451366">
    <property type="protein sequence ID" value="BAG70180.1"/>
    <property type="molecule type" value="mRNA"/>
</dbReference>
<dbReference type="EMBL" id="AC023170">
    <property type="status" value="NOT_ANNOTATED_CDS"/>
    <property type="molecule type" value="Genomic_DNA"/>
</dbReference>
<dbReference type="EMBL" id="BC126366">
    <property type="protein sequence ID" value="AAI26367.1"/>
    <property type="molecule type" value="mRNA"/>
</dbReference>
<dbReference type="EMBL" id="X64269">
    <property type="protein sequence ID" value="CAA45562.1"/>
    <property type="molecule type" value="Genomic_DNA"/>
</dbReference>
<dbReference type="CCDS" id="CCDS59217.1">
    <molecule id="Q00059-2"/>
</dbReference>
<dbReference type="CCDS" id="CCDS7253.1">
    <molecule id="Q00059-1"/>
</dbReference>
<dbReference type="PIR" id="JC1496">
    <property type="entry name" value="JC1496"/>
</dbReference>
<dbReference type="RefSeq" id="NP_001257711.1">
    <molecule id="Q00059-2"/>
    <property type="nucleotide sequence ID" value="NM_001270782.2"/>
</dbReference>
<dbReference type="RefSeq" id="NP_003192.1">
    <molecule id="Q00059-1"/>
    <property type="nucleotide sequence ID" value="NM_003201.3"/>
</dbReference>
<dbReference type="PDB" id="3FGH">
    <property type="method" value="X-ray"/>
    <property type="resolution" value="1.35 A"/>
    <property type="chains" value="A=153-218"/>
</dbReference>
<dbReference type="PDB" id="3TMM">
    <property type="method" value="X-ray"/>
    <property type="resolution" value="2.50 A"/>
    <property type="chains" value="A=43-246"/>
</dbReference>
<dbReference type="PDB" id="3TQ6">
    <property type="method" value="X-ray"/>
    <property type="resolution" value="2.45 A"/>
    <property type="chains" value="A/B=43-246"/>
</dbReference>
<dbReference type="PDB" id="4NNU">
    <property type="method" value="X-ray"/>
    <property type="resolution" value="2.81 A"/>
    <property type="chains" value="A/B=43-237"/>
</dbReference>
<dbReference type="PDB" id="4NOD">
    <property type="method" value="X-ray"/>
    <property type="resolution" value="2.90 A"/>
    <property type="chains" value="A/B/G/H=43-237"/>
</dbReference>
<dbReference type="PDB" id="6ERP">
    <property type="method" value="X-ray"/>
    <property type="resolution" value="4.50 A"/>
    <property type="chains" value="C/G=43-245"/>
</dbReference>
<dbReference type="PDB" id="6ERQ">
    <property type="method" value="X-ray"/>
    <property type="resolution" value="4.50 A"/>
    <property type="chains" value="C/G=43-245"/>
</dbReference>
<dbReference type="PDB" id="6HB4">
    <property type="method" value="X-ray"/>
    <property type="resolution" value="3.05 A"/>
    <property type="chains" value="A/D/G/J=42-246"/>
</dbReference>
<dbReference type="PDB" id="6HC3">
    <property type="method" value="X-ray"/>
    <property type="resolution" value="3.10 A"/>
    <property type="chains" value="A/D/G/J=34-246"/>
</dbReference>
<dbReference type="PDB" id="7LBW">
    <property type="method" value="X-ray"/>
    <property type="resolution" value="2.84 A"/>
    <property type="chains" value="A/B=43-246"/>
</dbReference>
<dbReference type="PDB" id="7LBX">
    <property type="method" value="X-ray"/>
    <property type="resolution" value="2.70 A"/>
    <property type="chains" value="A/B=43-246"/>
</dbReference>
<dbReference type="PDBsum" id="3FGH"/>
<dbReference type="PDBsum" id="3TMM"/>
<dbReference type="PDBsum" id="3TQ6"/>
<dbReference type="PDBsum" id="4NNU"/>
<dbReference type="PDBsum" id="4NOD"/>
<dbReference type="PDBsum" id="6ERP"/>
<dbReference type="PDBsum" id="6ERQ"/>
<dbReference type="PDBsum" id="6HB4"/>
<dbReference type="PDBsum" id="6HC3"/>
<dbReference type="PDBsum" id="7LBW"/>
<dbReference type="PDBsum" id="7LBX"/>
<dbReference type="EMDB" id="EMD-2529"/>
<dbReference type="SMR" id="Q00059"/>
<dbReference type="BioGRID" id="112877">
    <property type="interactions" value="439"/>
</dbReference>
<dbReference type="ComplexPortal" id="CPX-7241">
    <property type="entry name" value="Mitochondrial transcription initiation complex"/>
</dbReference>
<dbReference type="FunCoup" id="Q00059">
    <property type="interactions" value="3583"/>
</dbReference>
<dbReference type="IntAct" id="Q00059">
    <property type="interactions" value="148"/>
</dbReference>
<dbReference type="MINT" id="Q00059"/>
<dbReference type="STRING" id="9606.ENSP00000420588"/>
<dbReference type="GlyGen" id="Q00059">
    <property type="glycosylation" value="1 site, 1 O-linked glycan (1 site)"/>
</dbReference>
<dbReference type="iPTMnet" id="Q00059"/>
<dbReference type="MetOSite" id="Q00059"/>
<dbReference type="PhosphoSitePlus" id="Q00059"/>
<dbReference type="SwissPalm" id="Q00059"/>
<dbReference type="BioMuta" id="TFAM"/>
<dbReference type="DMDM" id="417324"/>
<dbReference type="jPOST" id="Q00059"/>
<dbReference type="MassIVE" id="Q00059"/>
<dbReference type="PaxDb" id="9606-ENSP00000420588"/>
<dbReference type="PeptideAtlas" id="Q00059"/>
<dbReference type="ProteomicsDB" id="1958"/>
<dbReference type="ProteomicsDB" id="57840">
    <molecule id="Q00059-1"/>
</dbReference>
<dbReference type="Pumba" id="Q00059"/>
<dbReference type="TopDownProteomics" id="Q00059-1">
    <molecule id="Q00059-1"/>
</dbReference>
<dbReference type="Antibodypedia" id="14209">
    <property type="antibodies" value="556 antibodies from 42 providers"/>
</dbReference>
<dbReference type="DNASU" id="7019"/>
<dbReference type="Ensembl" id="ENST00000373895.7">
    <molecule id="Q00059-2"/>
    <property type="protein sequence ID" value="ENSP00000363002.3"/>
    <property type="gene ID" value="ENSG00000108064.11"/>
</dbReference>
<dbReference type="Ensembl" id="ENST00000487519.6">
    <molecule id="Q00059-1"/>
    <property type="protein sequence ID" value="ENSP00000420588.1"/>
    <property type="gene ID" value="ENSG00000108064.11"/>
</dbReference>
<dbReference type="GeneID" id="7019"/>
<dbReference type="KEGG" id="hsa:7019"/>
<dbReference type="MANE-Select" id="ENST00000487519.6">
    <property type="protein sequence ID" value="ENSP00000420588.1"/>
    <property type="RefSeq nucleotide sequence ID" value="NM_003201.3"/>
    <property type="RefSeq protein sequence ID" value="NP_003192.1"/>
</dbReference>
<dbReference type="UCSC" id="uc001jkf.5">
    <molecule id="Q00059-1"/>
    <property type="organism name" value="human"/>
</dbReference>
<dbReference type="AGR" id="HGNC:11741"/>
<dbReference type="CTD" id="7019"/>
<dbReference type="DisGeNET" id="7019"/>
<dbReference type="GeneCards" id="TFAM"/>
<dbReference type="HGNC" id="HGNC:11741">
    <property type="gene designation" value="TFAM"/>
</dbReference>
<dbReference type="HPA" id="ENSG00000108064">
    <property type="expression patterns" value="Low tissue specificity"/>
</dbReference>
<dbReference type="MalaCards" id="TFAM"/>
<dbReference type="MIM" id="600438">
    <property type="type" value="gene"/>
</dbReference>
<dbReference type="MIM" id="617156">
    <property type="type" value="phenotype"/>
</dbReference>
<dbReference type="neXtProt" id="NX_Q00059"/>
<dbReference type="OpenTargets" id="ENSG00000108064"/>
<dbReference type="PharmGKB" id="PA36458"/>
<dbReference type="VEuPathDB" id="HostDB:ENSG00000108064"/>
<dbReference type="eggNOG" id="KOG0381">
    <property type="taxonomic scope" value="Eukaryota"/>
</dbReference>
<dbReference type="GeneTree" id="ENSGT00440000039001"/>
<dbReference type="HOGENOM" id="CLU_083132_0_0_1"/>
<dbReference type="InParanoid" id="Q00059"/>
<dbReference type="OMA" id="YMQLAED"/>
<dbReference type="OrthoDB" id="5550281at2759"/>
<dbReference type="PAN-GO" id="Q00059">
    <property type="GO annotations" value="3 GO annotations based on evolutionary models"/>
</dbReference>
<dbReference type="PhylomeDB" id="Q00059"/>
<dbReference type="TreeFam" id="TF318343"/>
<dbReference type="PathwayCommons" id="Q00059"/>
<dbReference type="Reactome" id="R-HSA-163282">
    <property type="pathway name" value="Mitochondrial transcription initiation"/>
</dbReference>
<dbReference type="Reactome" id="R-HSA-2151201">
    <property type="pathway name" value="Transcriptional activation of mitochondrial biogenesis"/>
</dbReference>
<dbReference type="Reactome" id="R-HSA-9837999">
    <property type="pathway name" value="Mitochondrial protein degradation"/>
</dbReference>
<dbReference type="SignaLink" id="Q00059"/>
<dbReference type="SIGNOR" id="Q00059"/>
<dbReference type="BioGRID-ORCS" id="7019">
    <property type="hits" value="524 hits in 1188 CRISPR screens"/>
</dbReference>
<dbReference type="CD-CODE" id="5965E019">
    <property type="entry name" value="mtRNA granule"/>
</dbReference>
<dbReference type="CD-CODE" id="FB4E32DD">
    <property type="entry name" value="Presynaptic clusters and postsynaptic densities"/>
</dbReference>
<dbReference type="ChiTaRS" id="TFAM">
    <property type="organism name" value="human"/>
</dbReference>
<dbReference type="EvolutionaryTrace" id="Q00059"/>
<dbReference type="GeneWiki" id="TFAM"/>
<dbReference type="GenomeRNAi" id="7019"/>
<dbReference type="Pharos" id="Q00059">
    <property type="development level" value="Tbio"/>
</dbReference>
<dbReference type="PRO" id="PR:Q00059"/>
<dbReference type="Proteomes" id="UP000005640">
    <property type="component" value="Chromosome 10"/>
</dbReference>
<dbReference type="RNAct" id="Q00059">
    <property type="molecule type" value="protein"/>
</dbReference>
<dbReference type="Bgee" id="ENSG00000108064">
    <property type="expression patterns" value="Expressed in right testis and 208 other cell types or tissues"/>
</dbReference>
<dbReference type="ExpressionAtlas" id="Q00059">
    <property type="expression patterns" value="baseline and differential"/>
</dbReference>
<dbReference type="GO" id="GO:0005829">
    <property type="term" value="C:cytosol"/>
    <property type="evidence" value="ECO:0000304"/>
    <property type="project" value="Reactome"/>
</dbReference>
<dbReference type="GO" id="GO:0005759">
    <property type="term" value="C:mitochondrial matrix"/>
    <property type="evidence" value="ECO:0000314"/>
    <property type="project" value="UniProtKB"/>
</dbReference>
<dbReference type="GO" id="GO:0042645">
    <property type="term" value="C:mitochondrial nucleoid"/>
    <property type="evidence" value="ECO:0000314"/>
    <property type="project" value="UniProtKB"/>
</dbReference>
<dbReference type="GO" id="GO:0005739">
    <property type="term" value="C:mitochondrion"/>
    <property type="evidence" value="ECO:0000314"/>
    <property type="project" value="HPA"/>
</dbReference>
<dbReference type="GO" id="GO:0005634">
    <property type="term" value="C:nucleus"/>
    <property type="evidence" value="ECO:0007005"/>
    <property type="project" value="UniProtKB"/>
</dbReference>
<dbReference type="GO" id="GO:0032991">
    <property type="term" value="C:protein-containing complex"/>
    <property type="evidence" value="ECO:0000314"/>
    <property type="project" value="UniProtKB"/>
</dbReference>
<dbReference type="GO" id="GO:0003682">
    <property type="term" value="F:chromatin binding"/>
    <property type="evidence" value="ECO:0000314"/>
    <property type="project" value="UniProtKB"/>
</dbReference>
<dbReference type="GO" id="GO:0008301">
    <property type="term" value="F:DNA binding, bending"/>
    <property type="evidence" value="ECO:0000318"/>
    <property type="project" value="GO_Central"/>
</dbReference>
<dbReference type="GO" id="GO:0031072">
    <property type="term" value="F:heat shock protein binding"/>
    <property type="evidence" value="ECO:0007669"/>
    <property type="project" value="Ensembl"/>
</dbReference>
<dbReference type="GO" id="GO:0001018">
    <property type="term" value="F:mitochondrial promoter sequence-specific DNA binding"/>
    <property type="evidence" value="ECO:0000314"/>
    <property type="project" value="UniProtKB"/>
</dbReference>
<dbReference type="GO" id="GO:0034246">
    <property type="term" value="F:mitochondrial transcription factor activity"/>
    <property type="evidence" value="ECO:0000315"/>
    <property type="project" value="GO_Central"/>
</dbReference>
<dbReference type="GO" id="GO:0003723">
    <property type="term" value="F:RNA binding"/>
    <property type="evidence" value="ECO:0007005"/>
    <property type="project" value="UniProtKB"/>
</dbReference>
<dbReference type="GO" id="GO:0043565">
    <property type="term" value="F:sequence-specific DNA binding"/>
    <property type="evidence" value="ECO:0000314"/>
    <property type="project" value="UniProtKB"/>
</dbReference>
<dbReference type="GO" id="GO:0000976">
    <property type="term" value="F:transcription cis-regulatory region binding"/>
    <property type="evidence" value="ECO:0000318"/>
    <property type="project" value="GO_Central"/>
</dbReference>
<dbReference type="GO" id="GO:0001223">
    <property type="term" value="F:transcription coactivator binding"/>
    <property type="evidence" value="ECO:0007669"/>
    <property type="project" value="Ensembl"/>
</dbReference>
<dbReference type="GO" id="GO:0033108">
    <property type="term" value="P:mitochondrial respiratory chain complex assembly"/>
    <property type="evidence" value="ECO:0007669"/>
    <property type="project" value="Ensembl"/>
</dbReference>
<dbReference type="GO" id="GO:0006390">
    <property type="term" value="P:mitochondrial transcription"/>
    <property type="evidence" value="ECO:0000315"/>
    <property type="project" value="UniProtKB"/>
</dbReference>
<dbReference type="GO" id="GO:0045893">
    <property type="term" value="P:positive regulation of DNA-templated transcription"/>
    <property type="evidence" value="ECO:0000314"/>
    <property type="project" value="UniProtKB"/>
</dbReference>
<dbReference type="GO" id="GO:0006357">
    <property type="term" value="P:regulation of transcription by RNA polymerase II"/>
    <property type="evidence" value="ECO:0000318"/>
    <property type="project" value="GO_Central"/>
</dbReference>
<dbReference type="GO" id="GO:0001666">
    <property type="term" value="P:response to hypoxia"/>
    <property type="evidence" value="ECO:0007669"/>
    <property type="project" value="Ensembl"/>
</dbReference>
<dbReference type="GO" id="GO:0007584">
    <property type="term" value="P:response to nutrient"/>
    <property type="evidence" value="ECO:0007669"/>
    <property type="project" value="Ensembl"/>
</dbReference>
<dbReference type="GO" id="GO:0006391">
    <property type="term" value="P:transcription initiation at mitochondrial promoter"/>
    <property type="evidence" value="ECO:0000314"/>
    <property type="project" value="UniProtKB"/>
</dbReference>
<dbReference type="CDD" id="cd21986">
    <property type="entry name" value="HMG-box_TFAM_rpt1"/>
    <property type="match status" value="1"/>
</dbReference>
<dbReference type="CDD" id="cd21987">
    <property type="entry name" value="HMG-box_TFAM_rpt2"/>
    <property type="match status" value="1"/>
</dbReference>
<dbReference type="FunFam" id="1.10.30.10:FF:000043">
    <property type="entry name" value="Transcription factor A, mitochondrial"/>
    <property type="match status" value="1"/>
</dbReference>
<dbReference type="FunFam" id="1.10.30.10:FF:000045">
    <property type="entry name" value="Transcription factor A, mitochondrial"/>
    <property type="match status" value="1"/>
</dbReference>
<dbReference type="Gene3D" id="1.10.30.10">
    <property type="entry name" value="High mobility group box domain"/>
    <property type="match status" value="2"/>
</dbReference>
<dbReference type="InterPro" id="IPR009071">
    <property type="entry name" value="HMG_box_dom"/>
</dbReference>
<dbReference type="InterPro" id="IPR036910">
    <property type="entry name" value="HMG_box_dom_sf"/>
</dbReference>
<dbReference type="InterPro" id="IPR050342">
    <property type="entry name" value="HMGB"/>
</dbReference>
<dbReference type="PANTHER" id="PTHR48112">
    <property type="entry name" value="HIGH MOBILITY GROUP PROTEIN DSP1"/>
    <property type="match status" value="1"/>
</dbReference>
<dbReference type="PANTHER" id="PTHR48112:SF36">
    <property type="entry name" value="TRANSCRIPTION FACTOR A, MITOCHONDRIAL"/>
    <property type="match status" value="1"/>
</dbReference>
<dbReference type="Pfam" id="PF00505">
    <property type="entry name" value="HMG_box"/>
    <property type="match status" value="1"/>
</dbReference>
<dbReference type="Pfam" id="PF09011">
    <property type="entry name" value="HMG_box_2"/>
    <property type="match status" value="1"/>
</dbReference>
<dbReference type="SMART" id="SM00398">
    <property type="entry name" value="HMG"/>
    <property type="match status" value="2"/>
</dbReference>
<dbReference type="SUPFAM" id="SSF47095">
    <property type="entry name" value="HMG-box"/>
    <property type="match status" value="2"/>
</dbReference>
<dbReference type="PROSITE" id="PS50118">
    <property type="entry name" value="HMG_BOX_2"/>
    <property type="match status" value="2"/>
</dbReference>
<accession>Q00059</accession>
<accession>A8MRB2</accession>
<accession>A9QXC6</accession>
<accession>B5BU05</accession>
<accession>Q5U0C6</accession>
<organism>
    <name type="scientific">Homo sapiens</name>
    <name type="common">Human</name>
    <dbReference type="NCBI Taxonomy" id="9606"/>
    <lineage>
        <taxon>Eukaryota</taxon>
        <taxon>Metazoa</taxon>
        <taxon>Chordata</taxon>
        <taxon>Craniata</taxon>
        <taxon>Vertebrata</taxon>
        <taxon>Euteleostomi</taxon>
        <taxon>Mammalia</taxon>
        <taxon>Eutheria</taxon>
        <taxon>Euarchontoglires</taxon>
        <taxon>Primates</taxon>
        <taxon>Haplorrhini</taxon>
        <taxon>Catarrhini</taxon>
        <taxon>Hominidae</taxon>
        <taxon>Homo</taxon>
    </lineage>
</organism>
<gene>
    <name evidence="20" type="primary">TFAM</name>
    <name type="synonym">TCF6</name>
    <name type="synonym">TCF6L2</name>
</gene>
<feature type="transit peptide" description="Mitochondrion" evidence="1 25">
    <location>
        <begin position="1"/>
        <end position="42"/>
    </location>
</feature>
<feature type="chain" id="PRO_0000013470" description="Transcription factor A, mitochondrial">
    <location>
        <begin position="43"/>
        <end position="246"/>
    </location>
</feature>
<feature type="DNA-binding region" description="HMG box 1" evidence="2">
    <location>
        <begin position="50"/>
        <end position="118"/>
    </location>
</feature>
<feature type="DNA-binding region" description="HMG box 2" evidence="2">
    <location>
        <begin position="155"/>
        <end position="219"/>
    </location>
</feature>
<feature type="site" description="Intercalates between bases and promotes DNA bending">
    <location>
        <position position="58"/>
    </location>
</feature>
<feature type="site" description="Intercalates between bases and promotes DNA bending">
    <location>
        <position position="182"/>
    </location>
</feature>
<feature type="modified residue" description="Phosphoserine; by PKA" evidence="14">
    <location>
        <position position="55"/>
    </location>
</feature>
<feature type="modified residue" description="Phosphoserine; by PKA" evidence="14">
    <location>
        <position position="56"/>
    </location>
</feature>
<feature type="modified residue" description="Phosphoserine; by PKA" evidence="14">
    <location>
        <position position="61"/>
    </location>
</feature>
<feature type="modified residue" description="Phosphothreonine" evidence="24">
    <location>
        <position position="122"/>
    </location>
</feature>
<feature type="modified residue" description="Phosphoserine; by PKA" evidence="14">
    <location>
        <position position="160"/>
    </location>
</feature>
<feature type="modified residue" description="Phosphoserine" evidence="23 24">
    <location>
        <position position="193"/>
    </location>
</feature>
<feature type="modified residue" description="Phosphoserine" evidence="24">
    <location>
        <position position="195"/>
    </location>
</feature>
<feature type="splice variant" id="VSP_047019" description="In isoform 2." evidence="19">
    <location>
        <begin position="148"/>
        <end position="179"/>
    </location>
</feature>
<feature type="sequence variant" id="VAR_016124" description="In dbSNP:rs1937." evidence="4 7 8">
    <original>S</original>
    <variation>T</variation>
    <location>
        <position position="12"/>
    </location>
</feature>
<feature type="sequence variant" id="VAR_077842" description="In MTDPS15; dbSNP:rs757075712." evidence="15">
    <original>P</original>
    <variation>L</variation>
    <location>
        <position position="178"/>
    </location>
</feature>
<feature type="mutagenesis site" description="Moderate reduction in DNA bending." evidence="11">
    <original>T</original>
    <variation>A</variation>
    <location>
        <position position="77"/>
    </location>
</feature>
<feature type="mutagenesis site" description="Moderate reduction in DNA bending." evidence="11">
    <original>Y</original>
    <variation>A</variation>
    <location>
        <position position="162"/>
    </location>
</feature>
<feature type="sequence conflict" description="In Ref. 8; CAA45562." evidence="19" ref="8">
    <original>S</original>
    <variation>R</variation>
    <location>
        <position position="34"/>
    </location>
</feature>
<feature type="helix" evidence="27">
    <location>
        <begin position="45"/>
        <end position="48"/>
    </location>
</feature>
<feature type="helix" evidence="27">
    <location>
        <begin position="56"/>
        <end position="71"/>
    </location>
</feature>
<feature type="strand" evidence="28">
    <location>
        <begin position="73"/>
        <end position="75"/>
    </location>
</feature>
<feature type="helix" evidence="27">
    <location>
        <begin position="77"/>
        <end position="90"/>
    </location>
</feature>
<feature type="helix" evidence="27">
    <location>
        <begin position="93"/>
        <end position="120"/>
    </location>
</feature>
<feature type="helix" evidence="27">
    <location>
        <begin position="123"/>
        <end position="151"/>
    </location>
</feature>
<feature type="helix" evidence="26">
    <location>
        <begin position="161"/>
        <end position="173"/>
    </location>
</feature>
<feature type="strand" evidence="26">
    <location>
        <begin position="175"/>
        <end position="177"/>
    </location>
</feature>
<feature type="helix" evidence="26">
    <location>
        <begin position="178"/>
        <end position="190"/>
    </location>
</feature>
<feature type="helix" evidence="26">
    <location>
        <begin position="194"/>
        <end position="217"/>
    </location>
</feature>
<feature type="helix" evidence="27">
    <location>
        <begin position="228"/>
        <end position="230"/>
    </location>
</feature>